<comment type="function">
    <text evidence="1">Plays a critical role in eye formation by regulating the initial specification of retinal cells and/or their subsequent proliferation.</text>
</comment>
<comment type="subcellular location">
    <subcellularLocation>
        <location evidence="3 4">Nucleus</location>
    </subcellularLocation>
</comment>
<comment type="similarity">
    <text evidence="6">Belongs to the paired homeobox family. Bicoid subfamily.</text>
</comment>
<keyword id="KW-0217">Developmental protein</keyword>
<keyword id="KW-0238">DNA-binding</keyword>
<keyword id="KW-0371">Homeobox</keyword>
<keyword id="KW-0539">Nucleus</keyword>
<keyword id="KW-0804">Transcription</keyword>
<keyword id="KW-0805">Transcription regulation</keyword>
<proteinExistence type="evidence at transcript level"/>
<accession>Q9I9D5</accession>
<gene>
    <name type="primary">rx1</name>
</gene>
<feature type="chain" id="PRO_0000049282" description="Retinal homeobox protein Rx1">
    <location>
        <begin position="1"/>
        <end position="334"/>
    </location>
</feature>
<feature type="DNA-binding region" description="Homeobox" evidence="3">
    <location>
        <begin position="142"/>
        <end position="201"/>
    </location>
</feature>
<feature type="region of interest" description="Disordered" evidence="5">
    <location>
        <begin position="76"/>
        <end position="97"/>
    </location>
</feature>
<feature type="region of interest" description="Disordered" evidence="5">
    <location>
        <begin position="118"/>
        <end position="147"/>
    </location>
</feature>
<feature type="short sequence motif" description="Octapeptide motif">
    <location>
        <begin position="37"/>
        <end position="44"/>
    </location>
</feature>
<feature type="short sequence motif" description="OAR" evidence="4">
    <location>
        <begin position="311"/>
        <end position="324"/>
    </location>
</feature>
<feature type="short sequence motif" description="Nuclear localization signal" evidence="2">
    <location>
        <begin position="317"/>
        <end position="321"/>
    </location>
</feature>
<feature type="compositionally biased region" description="Basic and acidic residues" evidence="5">
    <location>
        <begin position="118"/>
        <end position="131"/>
    </location>
</feature>
<organism>
    <name type="scientific">Psalidodon fasciatus</name>
    <name type="common">Banded astyanax</name>
    <name type="synonym">Astyanax fasciatus</name>
    <dbReference type="NCBI Taxonomy" id="223369"/>
    <lineage>
        <taxon>Eukaryota</taxon>
        <taxon>Metazoa</taxon>
        <taxon>Chordata</taxon>
        <taxon>Craniata</taxon>
        <taxon>Vertebrata</taxon>
        <taxon>Euteleostomi</taxon>
        <taxon>Actinopterygii</taxon>
        <taxon>Neopterygii</taxon>
        <taxon>Teleostei</taxon>
        <taxon>Ostariophysi</taxon>
        <taxon>Characiformes</taxon>
        <taxon>Characoidei</taxon>
        <taxon>Acestrorhamphidae</taxon>
        <taxon>Acestrorhamphidae polyphyletic genera</taxon>
        <taxon>Psalidodon</taxon>
    </lineage>
</organism>
<dbReference type="EMBL" id="AF264703">
    <property type="protein sequence ID" value="AAF72201.1"/>
    <property type="molecule type" value="mRNA"/>
</dbReference>
<dbReference type="SMR" id="Q9I9D5"/>
<dbReference type="KEGG" id="amex:103032969"/>
<dbReference type="GO" id="GO:0005634">
    <property type="term" value="C:nucleus"/>
    <property type="evidence" value="ECO:0007669"/>
    <property type="project" value="UniProtKB-SubCell"/>
</dbReference>
<dbReference type="GO" id="GO:0000981">
    <property type="term" value="F:DNA-binding transcription factor activity, RNA polymerase II-specific"/>
    <property type="evidence" value="ECO:0007669"/>
    <property type="project" value="InterPro"/>
</dbReference>
<dbReference type="GO" id="GO:0000978">
    <property type="term" value="F:RNA polymerase II cis-regulatory region sequence-specific DNA binding"/>
    <property type="evidence" value="ECO:0007669"/>
    <property type="project" value="TreeGrafter"/>
</dbReference>
<dbReference type="GO" id="GO:0045944">
    <property type="term" value="P:positive regulation of transcription by RNA polymerase II"/>
    <property type="evidence" value="ECO:0007669"/>
    <property type="project" value="InterPro"/>
</dbReference>
<dbReference type="CDD" id="cd00086">
    <property type="entry name" value="homeodomain"/>
    <property type="match status" value="1"/>
</dbReference>
<dbReference type="FunFam" id="1.10.10.60:FF:000071">
    <property type="entry name" value="Retinal homeobox gene 2"/>
    <property type="match status" value="1"/>
</dbReference>
<dbReference type="Gene3D" id="1.10.10.60">
    <property type="entry name" value="Homeodomain-like"/>
    <property type="match status" value="1"/>
</dbReference>
<dbReference type="InterPro" id="IPR001356">
    <property type="entry name" value="HD"/>
</dbReference>
<dbReference type="InterPro" id="IPR017970">
    <property type="entry name" value="Homeobox_CS"/>
</dbReference>
<dbReference type="InterPro" id="IPR009057">
    <property type="entry name" value="Homeodomain-like_sf"/>
</dbReference>
<dbReference type="InterPro" id="IPR003654">
    <property type="entry name" value="OAR_dom"/>
</dbReference>
<dbReference type="InterPro" id="IPR043562">
    <property type="entry name" value="RAX/RAX2"/>
</dbReference>
<dbReference type="PANTHER" id="PTHR46271">
    <property type="entry name" value="HOMEOBOX PROTEIN, PUTATIVE-RELATED"/>
    <property type="match status" value="1"/>
</dbReference>
<dbReference type="PANTHER" id="PTHR46271:SF2">
    <property type="entry name" value="RETINA AND ANTERIOR NEURAL FOLD HOMEOBOX PROTEIN 2"/>
    <property type="match status" value="1"/>
</dbReference>
<dbReference type="Pfam" id="PF00046">
    <property type="entry name" value="Homeodomain"/>
    <property type="match status" value="1"/>
</dbReference>
<dbReference type="Pfam" id="PF03826">
    <property type="entry name" value="OAR"/>
    <property type="match status" value="1"/>
</dbReference>
<dbReference type="SMART" id="SM00389">
    <property type="entry name" value="HOX"/>
    <property type="match status" value="1"/>
</dbReference>
<dbReference type="SUPFAM" id="SSF46689">
    <property type="entry name" value="Homeodomain-like"/>
    <property type="match status" value="1"/>
</dbReference>
<dbReference type="PROSITE" id="PS00027">
    <property type="entry name" value="HOMEOBOX_1"/>
    <property type="match status" value="1"/>
</dbReference>
<dbReference type="PROSITE" id="PS50071">
    <property type="entry name" value="HOMEOBOX_2"/>
    <property type="match status" value="1"/>
</dbReference>
<dbReference type="PROSITE" id="PS50803">
    <property type="entry name" value="OAR"/>
    <property type="match status" value="1"/>
</dbReference>
<protein>
    <recommendedName>
        <fullName>Retinal homeobox protein Rx1</fullName>
    </recommendedName>
</protein>
<evidence type="ECO:0000250" key="1"/>
<evidence type="ECO:0000255" key="2"/>
<evidence type="ECO:0000255" key="3">
    <source>
        <dbReference type="PROSITE-ProRule" id="PRU00108"/>
    </source>
</evidence>
<evidence type="ECO:0000255" key="4">
    <source>
        <dbReference type="PROSITE-ProRule" id="PRU00138"/>
    </source>
</evidence>
<evidence type="ECO:0000256" key="5">
    <source>
        <dbReference type="SAM" id="MobiDB-lite"/>
    </source>
</evidence>
<evidence type="ECO:0000305" key="6"/>
<name>RX1_PSAFA</name>
<reference key="1">
    <citation type="journal article" date="2002" name="Int. J. Dev. Biol.">
        <title>Retinal homeobox genes and the role of cell proliferation in cavefish eye degeneration.</title>
        <authorList>
            <person name="Strickler A.G."/>
            <person name="Famuditimi K."/>
            <person name="Jeffery W.R."/>
        </authorList>
    </citation>
    <scope>NUCLEOTIDE SEQUENCE [MRNA]</scope>
</reference>
<sequence length="334" mass="37547">MHLSLDTMNMVDDSCLSPGNFPEMVKGGMAAIGNRVHSIDVILGFTKDQGPTLLNPGANTLTVPQKVEVESLGQLGKQDHPTHPYGQLPLRDSSEQPAFHGTLDTEIFSNKCESELGEVRKVSDSDRKSPEQGDEEQPKKKHRRNRTTFTTYQLHELERAFEKSHYPDVYSREELAMKVNLPEVRVQVWFQNRRAKWRRQEKMDASAVKLHDSPMLSFNRPPMHTNVGPMSNSLPLDPWLTSPLTSTTPVHSIPGFMGPSQGLQAGYPGHGFLNTPQSMGQSMQPMAPPPYQCPAVFTDKYPLEDTNQRSSSIASLRMKAKEHIQSMDKTWQPM</sequence>